<proteinExistence type="inferred from homology"/>
<feature type="chain" id="PRO_0000148290" description="Phosphoribosylformylglycinamidine cyclo-ligase">
    <location>
        <begin position="1"/>
        <end position="319"/>
    </location>
</feature>
<name>PUR5_SULTO</name>
<evidence type="ECO:0000255" key="1">
    <source>
        <dbReference type="HAMAP-Rule" id="MF_00741"/>
    </source>
</evidence>
<accession>Q970V2</accession>
<accession>F9VNF9</accession>
<keyword id="KW-0067">ATP-binding</keyword>
<keyword id="KW-0963">Cytoplasm</keyword>
<keyword id="KW-0436">Ligase</keyword>
<keyword id="KW-0547">Nucleotide-binding</keyword>
<keyword id="KW-0658">Purine biosynthesis</keyword>
<keyword id="KW-1185">Reference proteome</keyword>
<organism>
    <name type="scientific">Sulfurisphaera tokodaii (strain DSM 16993 / JCM 10545 / NBRC 100140 / 7)</name>
    <name type="common">Sulfolobus tokodaii</name>
    <dbReference type="NCBI Taxonomy" id="273063"/>
    <lineage>
        <taxon>Archaea</taxon>
        <taxon>Thermoproteota</taxon>
        <taxon>Thermoprotei</taxon>
        <taxon>Sulfolobales</taxon>
        <taxon>Sulfolobaceae</taxon>
        <taxon>Sulfurisphaera</taxon>
    </lineage>
</organism>
<gene>
    <name evidence="1" type="primary">purM</name>
    <name type="ordered locus">STK_14990</name>
</gene>
<dbReference type="EC" id="6.3.3.1" evidence="1"/>
<dbReference type="EMBL" id="BA000023">
    <property type="protein sequence ID" value="BAK54605.1"/>
    <property type="molecule type" value="Genomic_DNA"/>
</dbReference>
<dbReference type="RefSeq" id="WP_010979549.1">
    <property type="nucleotide sequence ID" value="NC_003106.2"/>
</dbReference>
<dbReference type="SMR" id="Q970V2"/>
<dbReference type="STRING" id="273063.STK_14990"/>
<dbReference type="GeneID" id="95642271"/>
<dbReference type="KEGG" id="sto:STK_14990"/>
<dbReference type="PATRIC" id="fig|273063.9.peg.1706"/>
<dbReference type="eggNOG" id="arCOG00639">
    <property type="taxonomic scope" value="Archaea"/>
</dbReference>
<dbReference type="OrthoDB" id="6605at2157"/>
<dbReference type="UniPathway" id="UPA00074">
    <property type="reaction ID" value="UER00129"/>
</dbReference>
<dbReference type="Proteomes" id="UP000001015">
    <property type="component" value="Chromosome"/>
</dbReference>
<dbReference type="GO" id="GO:0005829">
    <property type="term" value="C:cytosol"/>
    <property type="evidence" value="ECO:0007669"/>
    <property type="project" value="TreeGrafter"/>
</dbReference>
<dbReference type="GO" id="GO:0005524">
    <property type="term" value="F:ATP binding"/>
    <property type="evidence" value="ECO:0007669"/>
    <property type="project" value="UniProtKB-KW"/>
</dbReference>
<dbReference type="GO" id="GO:0004637">
    <property type="term" value="F:phosphoribosylamine-glycine ligase activity"/>
    <property type="evidence" value="ECO:0007669"/>
    <property type="project" value="TreeGrafter"/>
</dbReference>
<dbReference type="GO" id="GO:0004641">
    <property type="term" value="F:phosphoribosylformylglycinamidine cyclo-ligase activity"/>
    <property type="evidence" value="ECO:0007669"/>
    <property type="project" value="UniProtKB-UniRule"/>
</dbReference>
<dbReference type="GO" id="GO:0006189">
    <property type="term" value="P:'de novo' IMP biosynthetic process"/>
    <property type="evidence" value="ECO:0007669"/>
    <property type="project" value="UniProtKB-UniRule"/>
</dbReference>
<dbReference type="GO" id="GO:0046084">
    <property type="term" value="P:adenine biosynthetic process"/>
    <property type="evidence" value="ECO:0007669"/>
    <property type="project" value="TreeGrafter"/>
</dbReference>
<dbReference type="CDD" id="cd02196">
    <property type="entry name" value="PurM"/>
    <property type="match status" value="1"/>
</dbReference>
<dbReference type="FunFam" id="3.30.1330.10:FF:000020">
    <property type="entry name" value="Phosphoribosylformylglycinamidine cyclo-ligase"/>
    <property type="match status" value="1"/>
</dbReference>
<dbReference type="Gene3D" id="3.90.650.10">
    <property type="entry name" value="PurM-like C-terminal domain"/>
    <property type="match status" value="1"/>
</dbReference>
<dbReference type="Gene3D" id="3.30.1330.10">
    <property type="entry name" value="PurM-like, N-terminal domain"/>
    <property type="match status" value="1"/>
</dbReference>
<dbReference type="HAMAP" id="MF_00741">
    <property type="entry name" value="AIRS"/>
    <property type="match status" value="1"/>
</dbReference>
<dbReference type="InterPro" id="IPR010918">
    <property type="entry name" value="PurM-like_C_dom"/>
</dbReference>
<dbReference type="InterPro" id="IPR036676">
    <property type="entry name" value="PurM-like_C_sf"/>
</dbReference>
<dbReference type="InterPro" id="IPR016188">
    <property type="entry name" value="PurM-like_N"/>
</dbReference>
<dbReference type="InterPro" id="IPR036921">
    <property type="entry name" value="PurM-like_N_sf"/>
</dbReference>
<dbReference type="InterPro" id="IPR004733">
    <property type="entry name" value="PurM_cligase"/>
</dbReference>
<dbReference type="NCBIfam" id="TIGR00878">
    <property type="entry name" value="purM"/>
    <property type="match status" value="1"/>
</dbReference>
<dbReference type="PANTHER" id="PTHR10520:SF12">
    <property type="entry name" value="TRIFUNCTIONAL PURINE BIOSYNTHETIC PROTEIN ADENOSINE-3"/>
    <property type="match status" value="1"/>
</dbReference>
<dbReference type="PANTHER" id="PTHR10520">
    <property type="entry name" value="TRIFUNCTIONAL PURINE BIOSYNTHETIC PROTEIN ADENOSINE-3-RELATED"/>
    <property type="match status" value="1"/>
</dbReference>
<dbReference type="Pfam" id="PF00586">
    <property type="entry name" value="AIRS"/>
    <property type="match status" value="1"/>
</dbReference>
<dbReference type="Pfam" id="PF02769">
    <property type="entry name" value="AIRS_C"/>
    <property type="match status" value="1"/>
</dbReference>
<dbReference type="SUPFAM" id="SSF56042">
    <property type="entry name" value="PurM C-terminal domain-like"/>
    <property type="match status" value="1"/>
</dbReference>
<dbReference type="SUPFAM" id="SSF55326">
    <property type="entry name" value="PurM N-terminal domain-like"/>
    <property type="match status" value="1"/>
</dbReference>
<protein>
    <recommendedName>
        <fullName evidence="1">Phosphoribosylformylglycinamidine cyclo-ligase</fullName>
        <ecNumber evidence="1">6.3.3.1</ecNumber>
    </recommendedName>
    <alternativeName>
        <fullName evidence="1">AIR synthase</fullName>
    </alternativeName>
    <alternativeName>
        <fullName evidence="1">AIRS</fullName>
    </alternativeName>
    <alternativeName>
        <fullName evidence="1">Phosphoribosyl-aminoimidazole synthetase</fullName>
    </alternativeName>
</protein>
<comment type="catalytic activity">
    <reaction evidence="1">
        <text>2-formamido-N(1)-(5-O-phospho-beta-D-ribosyl)acetamidine + ATP = 5-amino-1-(5-phospho-beta-D-ribosyl)imidazole + ADP + phosphate + H(+)</text>
        <dbReference type="Rhea" id="RHEA:23032"/>
        <dbReference type="ChEBI" id="CHEBI:15378"/>
        <dbReference type="ChEBI" id="CHEBI:30616"/>
        <dbReference type="ChEBI" id="CHEBI:43474"/>
        <dbReference type="ChEBI" id="CHEBI:137981"/>
        <dbReference type="ChEBI" id="CHEBI:147287"/>
        <dbReference type="ChEBI" id="CHEBI:456216"/>
        <dbReference type="EC" id="6.3.3.1"/>
    </reaction>
</comment>
<comment type="pathway">
    <text evidence="1">Purine metabolism; IMP biosynthesis via de novo pathway; 5-amino-1-(5-phospho-D-ribosyl)imidazole from N(2)-formyl-N(1)-(5-phospho-D-ribosyl)glycinamide: step 2/2.</text>
</comment>
<comment type="subcellular location">
    <subcellularLocation>
        <location evidence="1">Cytoplasm</location>
    </subcellularLocation>
</comment>
<comment type="similarity">
    <text evidence="1">Belongs to the AIR synthase family.</text>
</comment>
<sequence>MVSEYKKAGVDLNKLKEYHTLALNTFQNSGVLKIGHYANAIKLDDKYLAMHVDGVGTKTILALKTGIIEPTGIDCIAMNVNDLVCIGARPLAGVDYLALEKPMDDVVEKVMKGLKQGADEANIEIIGGETAIMPGVITGYDLSCSVIGISDRLKTGEDVAPGDVILGLKSNGVHSNGYSLIRKLIDEGKLSLNDWGEELMRPTRIYSSSIIPILDKIKALAHITGGAFSKLKRITNYRINLKMPDPPEVFKAIENAGVPHFEMYKIFNMGIGMIIFVSKDLKDDIIEFLSKKETVYELGYVEKGEGIKITTYKNEILYI</sequence>
<reference key="1">
    <citation type="journal article" date="2001" name="DNA Res.">
        <title>Complete genome sequence of an aerobic thermoacidophilic Crenarchaeon, Sulfolobus tokodaii strain7.</title>
        <authorList>
            <person name="Kawarabayasi Y."/>
            <person name="Hino Y."/>
            <person name="Horikawa H."/>
            <person name="Jin-no K."/>
            <person name="Takahashi M."/>
            <person name="Sekine M."/>
            <person name="Baba S."/>
            <person name="Ankai A."/>
            <person name="Kosugi H."/>
            <person name="Hosoyama A."/>
            <person name="Fukui S."/>
            <person name="Nagai Y."/>
            <person name="Nishijima K."/>
            <person name="Otsuka R."/>
            <person name="Nakazawa H."/>
            <person name="Takamiya M."/>
            <person name="Kato Y."/>
            <person name="Yoshizawa T."/>
            <person name="Tanaka T."/>
            <person name="Kudoh Y."/>
            <person name="Yamazaki J."/>
            <person name="Kushida N."/>
            <person name="Oguchi A."/>
            <person name="Aoki K."/>
            <person name="Masuda S."/>
            <person name="Yanagii M."/>
            <person name="Nishimura M."/>
            <person name="Yamagishi A."/>
            <person name="Oshima T."/>
            <person name="Kikuchi H."/>
        </authorList>
    </citation>
    <scope>NUCLEOTIDE SEQUENCE [LARGE SCALE GENOMIC DNA]</scope>
    <source>
        <strain>DSM 16993 / JCM 10545 / NBRC 100140 / 7</strain>
    </source>
</reference>